<proteinExistence type="evidence at transcript level"/>
<organism>
    <name type="scientific">Solanum lycopersicum</name>
    <name type="common">Tomato</name>
    <name type="synonym">Lycopersicon esculentum</name>
    <dbReference type="NCBI Taxonomy" id="4081"/>
    <lineage>
        <taxon>Eukaryota</taxon>
        <taxon>Viridiplantae</taxon>
        <taxon>Streptophyta</taxon>
        <taxon>Embryophyta</taxon>
        <taxon>Tracheophyta</taxon>
        <taxon>Spermatophyta</taxon>
        <taxon>Magnoliopsida</taxon>
        <taxon>eudicotyledons</taxon>
        <taxon>Gunneridae</taxon>
        <taxon>Pentapetalae</taxon>
        <taxon>asterids</taxon>
        <taxon>lamiids</taxon>
        <taxon>Solanales</taxon>
        <taxon>Solanaceae</taxon>
        <taxon>Solanoideae</taxon>
        <taxon>Solaneae</taxon>
        <taxon>Solanum</taxon>
        <taxon>Solanum subgen. Lycopersicon</taxon>
    </lineage>
</organism>
<dbReference type="EMBL" id="AF010228">
    <property type="protein sequence ID" value="AAB64199.1"/>
    <property type="molecule type" value="mRNA"/>
</dbReference>
<dbReference type="RefSeq" id="NP_001233967.1">
    <property type="nucleotide sequence ID" value="NM_001247038.2"/>
</dbReference>
<dbReference type="RefSeq" id="XP_004248676.1">
    <property type="nucleotide sequence ID" value="XM_004248628.5"/>
</dbReference>
<dbReference type="RefSeq" id="XP_004248677.1">
    <property type="nucleotide sequence ID" value="XM_004248629.5"/>
</dbReference>
<dbReference type="SMR" id="O24011"/>
<dbReference type="STRING" id="4081.O24011"/>
<dbReference type="PaxDb" id="4081-Solyc10g054560.1.1"/>
<dbReference type="EnsemblPlants" id="Solyc10g054560.2.1">
    <property type="protein sequence ID" value="Solyc10g054560.2.1"/>
    <property type="gene ID" value="Solyc10g054560.2"/>
</dbReference>
<dbReference type="EnsemblPlants" id="Solyc10g054570.2.1">
    <property type="protein sequence ID" value="Solyc10g054570.2.1"/>
    <property type="gene ID" value="Solyc10g054570.2"/>
</dbReference>
<dbReference type="EnsemblPlants" id="Solyc10g054590.2.1">
    <property type="protein sequence ID" value="Solyc10g054590.2.1"/>
    <property type="gene ID" value="Solyc10g054590.2"/>
</dbReference>
<dbReference type="GeneID" id="101253944"/>
<dbReference type="GeneID" id="101254245"/>
<dbReference type="GeneID" id="543525"/>
<dbReference type="Gramene" id="Solyc10g054560.2.1">
    <property type="protein sequence ID" value="Solyc10g054560.2.1"/>
    <property type="gene ID" value="Solyc10g054560.2"/>
</dbReference>
<dbReference type="Gramene" id="Solyc10g054570.2.1">
    <property type="protein sequence ID" value="Solyc10g054570.2.1"/>
    <property type="gene ID" value="Solyc10g054570.2"/>
</dbReference>
<dbReference type="Gramene" id="Solyc10g054590.2.1">
    <property type="protein sequence ID" value="Solyc10g054590.2.1"/>
    <property type="gene ID" value="Solyc10g054590.2"/>
</dbReference>
<dbReference type="KEGG" id="sly:101253944"/>
<dbReference type="KEGG" id="sly:101254245"/>
<dbReference type="KEGG" id="sly:543525"/>
<dbReference type="eggNOG" id="KOG0232">
    <property type="taxonomic scope" value="Eukaryota"/>
</dbReference>
<dbReference type="HOGENOM" id="CLU_085752_1_0_1"/>
<dbReference type="InParanoid" id="O24011"/>
<dbReference type="OMA" id="MGVMKPD"/>
<dbReference type="OrthoDB" id="1301780at2759"/>
<dbReference type="PhylomeDB" id="O24011"/>
<dbReference type="Proteomes" id="UP000004994">
    <property type="component" value="Chromosome 10"/>
</dbReference>
<dbReference type="GO" id="GO:0016020">
    <property type="term" value="C:membrane"/>
    <property type="evidence" value="ECO:0000318"/>
    <property type="project" value="GO_Central"/>
</dbReference>
<dbReference type="GO" id="GO:0033179">
    <property type="term" value="C:proton-transporting V-type ATPase, V0 domain"/>
    <property type="evidence" value="ECO:0007669"/>
    <property type="project" value="InterPro"/>
</dbReference>
<dbReference type="GO" id="GO:0005774">
    <property type="term" value="C:vacuolar membrane"/>
    <property type="evidence" value="ECO:0007669"/>
    <property type="project" value="UniProtKB-SubCell"/>
</dbReference>
<dbReference type="GO" id="GO:0046961">
    <property type="term" value="F:proton-transporting ATPase activity, rotational mechanism"/>
    <property type="evidence" value="ECO:0007669"/>
    <property type="project" value="InterPro"/>
</dbReference>
<dbReference type="CDD" id="cd18175">
    <property type="entry name" value="ATP-synt_Vo_c_ATP6C_rpt1"/>
    <property type="match status" value="1"/>
</dbReference>
<dbReference type="CDD" id="cd18176">
    <property type="entry name" value="ATP-synt_Vo_c_ATP6C_rpt2"/>
    <property type="match status" value="1"/>
</dbReference>
<dbReference type="FunFam" id="1.20.120.610:FF:000003">
    <property type="entry name" value="V-type proton ATPase proteolipid subunit"/>
    <property type="match status" value="1"/>
</dbReference>
<dbReference type="Gene3D" id="1.20.120.610">
    <property type="entry name" value="lithium bound rotor ring of v- atpase"/>
    <property type="match status" value="1"/>
</dbReference>
<dbReference type="InterPro" id="IPR002379">
    <property type="entry name" value="ATPase_proteolipid_c-like_dom"/>
</dbReference>
<dbReference type="InterPro" id="IPR000245">
    <property type="entry name" value="ATPase_proteolipid_csu"/>
</dbReference>
<dbReference type="InterPro" id="IPR011555">
    <property type="entry name" value="ATPase_proteolipid_su_C_euk"/>
</dbReference>
<dbReference type="InterPro" id="IPR035921">
    <property type="entry name" value="F/V-ATP_Csub_sf"/>
</dbReference>
<dbReference type="NCBIfam" id="TIGR01100">
    <property type="entry name" value="V_ATP_synt_C"/>
    <property type="match status" value="1"/>
</dbReference>
<dbReference type="PANTHER" id="PTHR10263">
    <property type="entry name" value="V-TYPE PROTON ATPASE PROTEOLIPID SUBUNIT"/>
    <property type="match status" value="1"/>
</dbReference>
<dbReference type="Pfam" id="PF00137">
    <property type="entry name" value="ATP-synt_C"/>
    <property type="match status" value="2"/>
</dbReference>
<dbReference type="PRINTS" id="PR00122">
    <property type="entry name" value="VACATPASE"/>
</dbReference>
<dbReference type="SUPFAM" id="SSF81333">
    <property type="entry name" value="F1F0 ATP synthase subunit C"/>
    <property type="match status" value="2"/>
</dbReference>
<feature type="chain" id="PRO_0000071770" description="V-type proton ATPase 16 kDa proteolipid subunit">
    <location>
        <begin position="1"/>
        <end position="164"/>
    </location>
</feature>
<feature type="topological domain" description="Lumenal" evidence="2">
    <location>
        <begin position="1"/>
        <end position="9"/>
    </location>
</feature>
<feature type="transmembrane region" description="Helical" evidence="2">
    <location>
        <begin position="10"/>
        <end position="32"/>
    </location>
</feature>
<feature type="topological domain" description="Cytoplasmic" evidence="2">
    <location>
        <begin position="33"/>
        <end position="54"/>
    </location>
</feature>
<feature type="transmembrane region" description="Helical" evidence="2">
    <location>
        <begin position="55"/>
        <end position="75"/>
    </location>
</feature>
<feature type="topological domain" description="Lumenal" evidence="2">
    <location>
        <begin position="76"/>
        <end position="94"/>
    </location>
</feature>
<feature type="transmembrane region" description="Helical" evidence="2">
    <location>
        <begin position="95"/>
        <end position="116"/>
    </location>
</feature>
<feature type="topological domain" description="Cytoplasmic" evidence="2">
    <location>
        <begin position="117"/>
        <end position="128"/>
    </location>
</feature>
<feature type="transmembrane region" description="Helical" evidence="2">
    <location>
        <begin position="129"/>
        <end position="154"/>
    </location>
</feature>
<feature type="topological domain" description="Lumenal" evidence="2">
    <location>
        <begin position="155"/>
        <end position="164"/>
    </location>
</feature>
<feature type="site" description="Essential for proton translocation" evidence="1">
    <location>
        <position position="141"/>
    </location>
</feature>
<reference key="1">
    <citation type="submission" date="1997-07" db="EMBL/GenBank/DDBJ databases">
        <authorList>
            <person name="Cooley M."/>
            <person name="Yang H."/>
            <person name="Dahal P."/>
            <person name="Mella A."/>
            <person name="Downie B."/>
            <person name="Bradford K.J."/>
        </authorList>
    </citation>
    <scope>NUCLEOTIDE SEQUENCE [MRNA]</scope>
    <source>
        <strain>cv. Castlemart</strain>
        <tissue>Root</tissue>
    </source>
</reference>
<name>VATL_SOLLC</name>
<keyword id="KW-0375">Hydrogen ion transport</keyword>
<keyword id="KW-0406">Ion transport</keyword>
<keyword id="KW-0472">Membrane</keyword>
<keyword id="KW-1185">Reference proteome</keyword>
<keyword id="KW-0812">Transmembrane</keyword>
<keyword id="KW-1133">Transmembrane helix</keyword>
<keyword id="KW-0813">Transport</keyword>
<keyword id="KW-0926">Vacuole</keyword>
<protein>
    <recommendedName>
        <fullName>V-type proton ATPase 16 kDa proteolipid subunit</fullName>
        <shortName>V-ATPase 16 kDa proteolipid subunit</shortName>
    </recommendedName>
    <alternativeName>
        <fullName>Vacuolar proton pump 16 kDa proteolipid subunit</fullName>
    </alternativeName>
</protein>
<sequence length="164" mass="16599">MSNFAGDETAPFFGFLGAAAALVFSCMGAAYGTAKSGVGVASMGVMRPELVMKSIVPVVMAGVLGIYGLIIAVIISTGINPKTKSYYLFDGYAHLSSGLACGLAGLSAGMAIGIVGDAGVRANAQQPKLFVGMILILIFAEALALYGLIVGIILSSRAGQSRAE</sequence>
<evidence type="ECO:0000250" key="1"/>
<evidence type="ECO:0000255" key="2"/>
<evidence type="ECO:0000305" key="3"/>
<comment type="function">
    <text>Proton-conducting pore forming subunit of the membrane integral V0 complex of vacuolar ATPase. V-ATPase is responsible for acidifying a variety of intracellular compartments in eukaryotic cells.</text>
</comment>
<comment type="subunit">
    <text>V-ATPase is a heteromultimeric enzyme composed of a peripheral catalytic V1 complex (main components: subunits A, B, C, D, E, and F) attached to an integral membrane V0 proton pore complex (main component: the proteolipid protein; which is present as a hexamer that forms the proton-conducting pore).</text>
</comment>
<comment type="subcellular location">
    <subcellularLocation>
        <location>Vacuole membrane</location>
        <topology>Multi-pass membrane protein</topology>
    </subcellularLocation>
    <text>Tonoplast.</text>
</comment>
<comment type="similarity">
    <text evidence="3">Belongs to the V-ATPase proteolipid subunit family.</text>
</comment>
<accession>O24011</accession>